<feature type="chain" id="PRO_0000159428" description="Cysteine--tRNA ligase">
    <location>
        <begin position="1"/>
        <end position="428"/>
    </location>
</feature>
<feature type="short sequence motif" description="'HIGH' region">
    <location>
        <begin position="25"/>
        <end position="35"/>
    </location>
</feature>
<feature type="short sequence motif" description="'KMSKS' region">
    <location>
        <begin position="253"/>
        <end position="257"/>
    </location>
</feature>
<feature type="binding site" evidence="1">
    <location>
        <position position="23"/>
    </location>
    <ligand>
        <name>Zn(2+)</name>
        <dbReference type="ChEBI" id="CHEBI:29105"/>
    </ligand>
</feature>
<feature type="binding site" evidence="1">
    <location>
        <position position="196"/>
    </location>
    <ligand>
        <name>Zn(2+)</name>
        <dbReference type="ChEBI" id="CHEBI:29105"/>
    </ligand>
</feature>
<feature type="binding site" evidence="1">
    <location>
        <position position="221"/>
    </location>
    <ligand>
        <name>Zn(2+)</name>
        <dbReference type="ChEBI" id="CHEBI:29105"/>
    </ligand>
</feature>
<feature type="binding site" evidence="1">
    <location>
        <position position="225"/>
    </location>
    <ligand>
        <name>Zn(2+)</name>
        <dbReference type="ChEBI" id="CHEBI:29105"/>
    </ligand>
</feature>
<feature type="binding site" evidence="1">
    <location>
        <position position="256"/>
    </location>
    <ligand>
        <name>ATP</name>
        <dbReference type="ChEBI" id="CHEBI:30616"/>
    </ligand>
</feature>
<comment type="catalytic activity">
    <reaction>
        <text>tRNA(Cys) + L-cysteine + ATP = L-cysteinyl-tRNA(Cys) + AMP + diphosphate</text>
        <dbReference type="Rhea" id="RHEA:17773"/>
        <dbReference type="Rhea" id="RHEA-COMP:9661"/>
        <dbReference type="Rhea" id="RHEA-COMP:9679"/>
        <dbReference type="ChEBI" id="CHEBI:30616"/>
        <dbReference type="ChEBI" id="CHEBI:33019"/>
        <dbReference type="ChEBI" id="CHEBI:35235"/>
        <dbReference type="ChEBI" id="CHEBI:78442"/>
        <dbReference type="ChEBI" id="CHEBI:78517"/>
        <dbReference type="ChEBI" id="CHEBI:456215"/>
        <dbReference type="EC" id="6.1.1.16"/>
    </reaction>
</comment>
<comment type="cofactor">
    <cofactor evidence="1">
        <name>Zn(2+)</name>
        <dbReference type="ChEBI" id="CHEBI:29105"/>
    </cofactor>
    <text evidence="1">Binds 1 zinc ion per subunit.</text>
</comment>
<comment type="subunit">
    <text evidence="1">Monomer.</text>
</comment>
<comment type="subcellular location">
    <subcellularLocation>
        <location evidence="1">Cytoplasm</location>
    </subcellularLocation>
</comment>
<comment type="similarity">
    <text evidence="2">Belongs to the class-I aminoacyl-tRNA synthetase family.</text>
</comment>
<reference key="1">
    <citation type="journal article" date="1995" name="Science">
        <title>The minimal gene complement of Mycoplasma genitalium.</title>
        <authorList>
            <person name="Fraser C.M."/>
            <person name="Gocayne J.D."/>
            <person name="White O."/>
            <person name="Adams M.D."/>
            <person name="Clayton R.A."/>
            <person name="Fleischmann R.D."/>
            <person name="Bult C.J."/>
            <person name="Kerlavage A.R."/>
            <person name="Sutton G.G."/>
            <person name="Kelley J.M."/>
            <person name="Fritchman J.L."/>
            <person name="Weidman J.F."/>
            <person name="Small K.V."/>
            <person name="Sandusky M."/>
            <person name="Fuhrmann J.L."/>
            <person name="Nguyen D.T."/>
            <person name="Utterback T.R."/>
            <person name="Saudek D.M."/>
            <person name="Phillips C.A."/>
            <person name="Merrick J.M."/>
            <person name="Tomb J.-F."/>
            <person name="Dougherty B.A."/>
            <person name="Bott K.F."/>
            <person name="Hu P.-C."/>
            <person name="Lucier T.S."/>
            <person name="Peterson S.N."/>
            <person name="Smith H.O."/>
            <person name="Hutchison C.A. III"/>
            <person name="Venter J.C."/>
        </authorList>
    </citation>
    <scope>NUCLEOTIDE SEQUENCE [LARGE SCALE GENOMIC DNA]</scope>
    <source>
        <strain>ATCC 33530 / DSM 19775 / NCTC 10195 / G37</strain>
    </source>
</reference>
<evidence type="ECO:0000250" key="1"/>
<evidence type="ECO:0000305" key="2"/>
<keyword id="KW-0030">Aminoacyl-tRNA synthetase</keyword>
<keyword id="KW-0067">ATP-binding</keyword>
<keyword id="KW-0963">Cytoplasm</keyword>
<keyword id="KW-0436">Ligase</keyword>
<keyword id="KW-0479">Metal-binding</keyword>
<keyword id="KW-0547">Nucleotide-binding</keyword>
<keyword id="KW-0648">Protein biosynthesis</keyword>
<keyword id="KW-1185">Reference proteome</keyword>
<keyword id="KW-0862">Zinc</keyword>
<gene>
    <name type="primary">cysS</name>
    <name type="ordered locus">MG253</name>
</gene>
<protein>
    <recommendedName>
        <fullName>Cysteine--tRNA ligase</fullName>
        <ecNumber>6.1.1.16</ecNumber>
    </recommendedName>
    <alternativeName>
        <fullName>Cysteinyl-tRNA synthetase</fullName>
        <shortName>CysRS</shortName>
    </alternativeName>
</protein>
<organism>
    <name type="scientific">Mycoplasma genitalium (strain ATCC 33530 / DSM 19775 / NCTC 10195 / G37)</name>
    <name type="common">Mycoplasmoides genitalium</name>
    <dbReference type="NCBI Taxonomy" id="243273"/>
    <lineage>
        <taxon>Bacteria</taxon>
        <taxon>Bacillati</taxon>
        <taxon>Mycoplasmatota</taxon>
        <taxon>Mycoplasmoidales</taxon>
        <taxon>Mycoplasmoidaceae</taxon>
        <taxon>Mycoplasmoides</taxon>
    </lineage>
</organism>
<accession>P47495</accession>
<proteinExistence type="inferred from homology"/>
<sequence>MIVDSVSQKPTTLVQKTINIYLCGPTVYNDLHLGNTRPLIVFDVLNRVLKKAKYTVNFVQNITDIDDKIIKIAQQQEVSESVVTKQQITAYKSLLKKLNILPIKHIQITEKIDKIPDYIDQLVNQNHAYVSTQNNVYFAVNSLKQYGYLANRMVHLEETDTDKKNKLDFVLWKITTAGIKWNSKWGLGRPGWHVECAFLIDYCFKNELTIHGGGVDLKFPHHENENALHMALYNQPITKHWMHIGHLMIENQKMSKSLQNFLLAVDFLNFHDFRVLRWIFYQKHYLHPIDLNQSLIEKANNDIQRIAKTLNVARTWLVYSEQSELISPKQYDPVFSALLDNLNFANAVAAIWKLIKKINTSIKTKDFSVLREQLSFLEWSIDLLGISFKSIHTKLNVRLIKEWSILHKQKAMDKADQIRKKLIKKMLL</sequence>
<dbReference type="EC" id="6.1.1.16"/>
<dbReference type="EMBL" id="L43967">
    <property type="protein sequence ID" value="AAC71473.1"/>
    <property type="molecule type" value="Genomic_DNA"/>
</dbReference>
<dbReference type="PIR" id="I64227">
    <property type="entry name" value="I64227"/>
</dbReference>
<dbReference type="SMR" id="P47495"/>
<dbReference type="FunCoup" id="P47495">
    <property type="interactions" value="173"/>
</dbReference>
<dbReference type="STRING" id="243273.MG_253"/>
<dbReference type="KEGG" id="mge:MG_253"/>
<dbReference type="eggNOG" id="COG0215">
    <property type="taxonomic scope" value="Bacteria"/>
</dbReference>
<dbReference type="HOGENOM" id="CLU_013528_0_0_14"/>
<dbReference type="InParanoid" id="P47495"/>
<dbReference type="Proteomes" id="UP000000807">
    <property type="component" value="Chromosome"/>
</dbReference>
<dbReference type="GO" id="GO:0005737">
    <property type="term" value="C:cytoplasm"/>
    <property type="evidence" value="ECO:0000318"/>
    <property type="project" value="GO_Central"/>
</dbReference>
<dbReference type="GO" id="GO:0005829">
    <property type="term" value="C:cytosol"/>
    <property type="evidence" value="ECO:0000318"/>
    <property type="project" value="GO_Central"/>
</dbReference>
<dbReference type="GO" id="GO:0005524">
    <property type="term" value="F:ATP binding"/>
    <property type="evidence" value="ECO:0000318"/>
    <property type="project" value="GO_Central"/>
</dbReference>
<dbReference type="GO" id="GO:0004817">
    <property type="term" value="F:cysteine-tRNA ligase activity"/>
    <property type="evidence" value="ECO:0000318"/>
    <property type="project" value="GO_Central"/>
</dbReference>
<dbReference type="GO" id="GO:0008270">
    <property type="term" value="F:zinc ion binding"/>
    <property type="evidence" value="ECO:0007669"/>
    <property type="project" value="UniProtKB-UniRule"/>
</dbReference>
<dbReference type="GO" id="GO:0006423">
    <property type="term" value="P:cysteinyl-tRNA aminoacylation"/>
    <property type="evidence" value="ECO:0000318"/>
    <property type="project" value="GO_Central"/>
</dbReference>
<dbReference type="CDD" id="cd00672">
    <property type="entry name" value="CysRS_core"/>
    <property type="match status" value="1"/>
</dbReference>
<dbReference type="Gene3D" id="1.20.120.1910">
    <property type="entry name" value="Cysteine-tRNA ligase, C-terminal anti-codon recognition domain"/>
    <property type="match status" value="1"/>
</dbReference>
<dbReference type="Gene3D" id="3.40.50.620">
    <property type="entry name" value="HUPs"/>
    <property type="match status" value="1"/>
</dbReference>
<dbReference type="HAMAP" id="MF_00041">
    <property type="entry name" value="Cys_tRNA_synth"/>
    <property type="match status" value="1"/>
</dbReference>
<dbReference type="InterPro" id="IPR015803">
    <property type="entry name" value="Cys-tRNA-ligase"/>
</dbReference>
<dbReference type="InterPro" id="IPR015273">
    <property type="entry name" value="Cys-tRNA-synt_Ia_DALR"/>
</dbReference>
<dbReference type="InterPro" id="IPR024909">
    <property type="entry name" value="Cys-tRNA/MSH_ligase"/>
</dbReference>
<dbReference type="InterPro" id="IPR014729">
    <property type="entry name" value="Rossmann-like_a/b/a_fold"/>
</dbReference>
<dbReference type="InterPro" id="IPR032678">
    <property type="entry name" value="tRNA-synt_1_cat_dom"/>
</dbReference>
<dbReference type="InterPro" id="IPR009080">
    <property type="entry name" value="tRNAsynth_Ia_anticodon-bd"/>
</dbReference>
<dbReference type="NCBIfam" id="TIGR00435">
    <property type="entry name" value="cysS"/>
    <property type="match status" value="1"/>
</dbReference>
<dbReference type="PANTHER" id="PTHR10890:SF3">
    <property type="entry name" value="CYSTEINE--TRNA LIGASE, CYTOPLASMIC"/>
    <property type="match status" value="1"/>
</dbReference>
<dbReference type="PANTHER" id="PTHR10890">
    <property type="entry name" value="CYSTEINYL-TRNA SYNTHETASE"/>
    <property type="match status" value="1"/>
</dbReference>
<dbReference type="Pfam" id="PF09190">
    <property type="entry name" value="DALR_2"/>
    <property type="match status" value="1"/>
</dbReference>
<dbReference type="Pfam" id="PF01406">
    <property type="entry name" value="tRNA-synt_1e"/>
    <property type="match status" value="1"/>
</dbReference>
<dbReference type="PRINTS" id="PR00983">
    <property type="entry name" value="TRNASYNTHCYS"/>
</dbReference>
<dbReference type="SUPFAM" id="SSF47323">
    <property type="entry name" value="Anticodon-binding domain of a subclass of class I aminoacyl-tRNA synthetases"/>
    <property type="match status" value="1"/>
</dbReference>
<dbReference type="SUPFAM" id="SSF52374">
    <property type="entry name" value="Nucleotidylyl transferase"/>
    <property type="match status" value="1"/>
</dbReference>
<name>SYC_MYCGE</name>